<reference key="1">
    <citation type="journal article" date="1985" name="Nucleic Acids Res.">
        <title>Structure of the human alpha 1-acid glycoprotein gene: sequence homology with other human acute phase protein genes.</title>
        <authorList>
            <person name="Dente L."/>
            <person name="Ciliberto G."/>
            <person name="Cortese R."/>
        </authorList>
    </citation>
    <scope>NUCLEOTIDE SEQUENCE [MRNA]</scope>
    <scope>VARIANT GLN-38</scope>
</reference>
<reference key="2">
    <citation type="journal article" date="1986" name="Gene">
        <title>Molecular cloning and nucleotide sequence of human alpha 1 acid glycoprotein cDNA.</title>
        <authorList>
            <person name="Board P.G."/>
            <person name="Jones I.M."/>
            <person name="Bentley A.K."/>
        </authorList>
    </citation>
    <scope>NUCLEOTIDE SEQUENCE [MRNA]</scope>
    <scope>VARIANT GLN-38</scope>
</reference>
<reference key="3">
    <citation type="journal article" date="1987" name="EMBO J.">
        <title>Structure and expression of the genes coding for human alpha 1-acid glycoprotein.</title>
        <authorList>
            <person name="Dente L."/>
            <person name="Pizza M.G."/>
            <person name="Metspalu A."/>
            <person name="Cortese R."/>
        </authorList>
    </citation>
    <scope>NUCLEOTIDE SEQUENCE [GENOMIC DNA]</scope>
    <scope>VARIANT GLN-38</scope>
</reference>
<reference key="4">
    <citation type="submission" date="2004-10" db="EMBL/GenBank/DDBJ databases">
        <title>Cloning of human full-length CDSs in BD Creator(TM) system donor vector.</title>
        <authorList>
            <person name="Kalnine N."/>
            <person name="Chen X."/>
            <person name="Rolfs A."/>
            <person name="Halleck A."/>
            <person name="Hines L."/>
            <person name="Eisenstein S."/>
            <person name="Koundinya M."/>
            <person name="Raphael J."/>
            <person name="Moreira D."/>
            <person name="Kelley T."/>
            <person name="LaBaer J."/>
            <person name="Lin Y."/>
            <person name="Phelan M."/>
            <person name="Farmer A."/>
        </authorList>
    </citation>
    <scope>NUCLEOTIDE SEQUENCE [LARGE SCALE MRNA]</scope>
    <scope>VARIANT GLN-38</scope>
</reference>
<reference key="5">
    <citation type="journal article" date="2004" name="Nat. Genet.">
        <title>Complete sequencing and characterization of 21,243 full-length human cDNAs.</title>
        <authorList>
            <person name="Ota T."/>
            <person name="Suzuki Y."/>
            <person name="Nishikawa T."/>
            <person name="Otsuki T."/>
            <person name="Sugiyama T."/>
            <person name="Irie R."/>
            <person name="Wakamatsu A."/>
            <person name="Hayashi K."/>
            <person name="Sato H."/>
            <person name="Nagai K."/>
            <person name="Kimura K."/>
            <person name="Makita H."/>
            <person name="Sekine M."/>
            <person name="Obayashi M."/>
            <person name="Nishi T."/>
            <person name="Shibahara T."/>
            <person name="Tanaka T."/>
            <person name="Ishii S."/>
            <person name="Yamamoto J."/>
            <person name="Saito K."/>
            <person name="Kawai Y."/>
            <person name="Isono Y."/>
            <person name="Nakamura Y."/>
            <person name="Nagahari K."/>
            <person name="Murakami K."/>
            <person name="Yasuda T."/>
            <person name="Iwayanagi T."/>
            <person name="Wagatsuma M."/>
            <person name="Shiratori A."/>
            <person name="Sudo H."/>
            <person name="Hosoiri T."/>
            <person name="Kaku Y."/>
            <person name="Kodaira H."/>
            <person name="Kondo H."/>
            <person name="Sugawara M."/>
            <person name="Takahashi M."/>
            <person name="Kanda K."/>
            <person name="Yokoi T."/>
            <person name="Furuya T."/>
            <person name="Kikkawa E."/>
            <person name="Omura Y."/>
            <person name="Abe K."/>
            <person name="Kamihara K."/>
            <person name="Katsuta N."/>
            <person name="Sato K."/>
            <person name="Tanikawa M."/>
            <person name="Yamazaki M."/>
            <person name="Ninomiya K."/>
            <person name="Ishibashi T."/>
            <person name="Yamashita H."/>
            <person name="Murakawa K."/>
            <person name="Fujimori K."/>
            <person name="Tanai H."/>
            <person name="Kimata M."/>
            <person name="Watanabe M."/>
            <person name="Hiraoka S."/>
            <person name="Chiba Y."/>
            <person name="Ishida S."/>
            <person name="Ono Y."/>
            <person name="Takiguchi S."/>
            <person name="Watanabe S."/>
            <person name="Yosida M."/>
            <person name="Hotuta T."/>
            <person name="Kusano J."/>
            <person name="Kanehori K."/>
            <person name="Takahashi-Fujii A."/>
            <person name="Hara H."/>
            <person name="Tanase T.-O."/>
            <person name="Nomura Y."/>
            <person name="Togiya S."/>
            <person name="Komai F."/>
            <person name="Hara R."/>
            <person name="Takeuchi K."/>
            <person name="Arita M."/>
            <person name="Imose N."/>
            <person name="Musashino K."/>
            <person name="Yuuki H."/>
            <person name="Oshima A."/>
            <person name="Sasaki N."/>
            <person name="Aotsuka S."/>
            <person name="Yoshikawa Y."/>
            <person name="Matsunawa H."/>
            <person name="Ichihara T."/>
            <person name="Shiohata N."/>
            <person name="Sano S."/>
            <person name="Moriya S."/>
            <person name="Momiyama H."/>
            <person name="Satoh N."/>
            <person name="Takami S."/>
            <person name="Terashima Y."/>
            <person name="Suzuki O."/>
            <person name="Nakagawa S."/>
            <person name="Senoh A."/>
            <person name="Mizoguchi H."/>
            <person name="Goto Y."/>
            <person name="Shimizu F."/>
            <person name="Wakebe H."/>
            <person name="Hishigaki H."/>
            <person name="Watanabe T."/>
            <person name="Sugiyama A."/>
            <person name="Takemoto M."/>
            <person name="Kawakami B."/>
            <person name="Yamazaki M."/>
            <person name="Watanabe K."/>
            <person name="Kumagai A."/>
            <person name="Itakura S."/>
            <person name="Fukuzumi Y."/>
            <person name="Fujimori Y."/>
            <person name="Komiyama M."/>
            <person name="Tashiro H."/>
            <person name="Tanigami A."/>
            <person name="Fujiwara T."/>
            <person name="Ono T."/>
            <person name="Yamada K."/>
            <person name="Fujii Y."/>
            <person name="Ozaki K."/>
            <person name="Hirao M."/>
            <person name="Ohmori Y."/>
            <person name="Kawabata A."/>
            <person name="Hikiji T."/>
            <person name="Kobatake N."/>
            <person name="Inagaki H."/>
            <person name="Ikema Y."/>
            <person name="Okamoto S."/>
            <person name="Okitani R."/>
            <person name="Kawakami T."/>
            <person name="Noguchi S."/>
            <person name="Itoh T."/>
            <person name="Shigeta K."/>
            <person name="Senba T."/>
            <person name="Matsumura K."/>
            <person name="Nakajima Y."/>
            <person name="Mizuno T."/>
            <person name="Morinaga M."/>
            <person name="Sasaki M."/>
            <person name="Togashi T."/>
            <person name="Oyama M."/>
            <person name="Hata H."/>
            <person name="Watanabe M."/>
            <person name="Komatsu T."/>
            <person name="Mizushima-Sugano J."/>
            <person name="Satoh T."/>
            <person name="Shirai Y."/>
            <person name="Takahashi Y."/>
            <person name="Nakagawa K."/>
            <person name="Okumura K."/>
            <person name="Nagase T."/>
            <person name="Nomura N."/>
            <person name="Kikuchi H."/>
            <person name="Masuho Y."/>
            <person name="Yamashita R."/>
            <person name="Nakai K."/>
            <person name="Yada T."/>
            <person name="Nakamura Y."/>
            <person name="Ohara O."/>
            <person name="Isogai T."/>
            <person name="Sugano S."/>
        </authorList>
    </citation>
    <scope>NUCLEOTIDE SEQUENCE [LARGE SCALE MRNA]</scope>
    <scope>VARIANT GLN-38</scope>
    <source>
        <tissue>Liver</tissue>
    </source>
</reference>
<reference key="6">
    <citation type="journal article" date="2004" name="Nature">
        <title>DNA sequence and analysis of human chromosome 9.</title>
        <authorList>
            <person name="Humphray S.J."/>
            <person name="Oliver K."/>
            <person name="Hunt A.R."/>
            <person name="Plumb R.W."/>
            <person name="Loveland J.E."/>
            <person name="Howe K.L."/>
            <person name="Andrews T.D."/>
            <person name="Searle S."/>
            <person name="Hunt S.E."/>
            <person name="Scott C.E."/>
            <person name="Jones M.C."/>
            <person name="Ainscough R."/>
            <person name="Almeida J.P."/>
            <person name="Ambrose K.D."/>
            <person name="Ashwell R.I.S."/>
            <person name="Babbage A.K."/>
            <person name="Babbage S."/>
            <person name="Bagguley C.L."/>
            <person name="Bailey J."/>
            <person name="Banerjee R."/>
            <person name="Barker D.J."/>
            <person name="Barlow K.F."/>
            <person name="Bates K."/>
            <person name="Beasley H."/>
            <person name="Beasley O."/>
            <person name="Bird C.P."/>
            <person name="Bray-Allen S."/>
            <person name="Brown A.J."/>
            <person name="Brown J.Y."/>
            <person name="Burford D."/>
            <person name="Burrill W."/>
            <person name="Burton J."/>
            <person name="Carder C."/>
            <person name="Carter N.P."/>
            <person name="Chapman J.C."/>
            <person name="Chen Y."/>
            <person name="Clarke G."/>
            <person name="Clark S.Y."/>
            <person name="Clee C.M."/>
            <person name="Clegg S."/>
            <person name="Collier R.E."/>
            <person name="Corby N."/>
            <person name="Crosier M."/>
            <person name="Cummings A.T."/>
            <person name="Davies J."/>
            <person name="Dhami P."/>
            <person name="Dunn M."/>
            <person name="Dutta I."/>
            <person name="Dyer L.W."/>
            <person name="Earthrowl M.E."/>
            <person name="Faulkner L."/>
            <person name="Fleming C.J."/>
            <person name="Frankish A."/>
            <person name="Frankland J.A."/>
            <person name="French L."/>
            <person name="Fricker D.G."/>
            <person name="Garner P."/>
            <person name="Garnett J."/>
            <person name="Ghori J."/>
            <person name="Gilbert J.G.R."/>
            <person name="Glison C."/>
            <person name="Grafham D.V."/>
            <person name="Gribble S."/>
            <person name="Griffiths C."/>
            <person name="Griffiths-Jones S."/>
            <person name="Grocock R."/>
            <person name="Guy J."/>
            <person name="Hall R.E."/>
            <person name="Hammond S."/>
            <person name="Harley J.L."/>
            <person name="Harrison E.S.I."/>
            <person name="Hart E.A."/>
            <person name="Heath P.D."/>
            <person name="Henderson C.D."/>
            <person name="Hopkins B.L."/>
            <person name="Howard P.J."/>
            <person name="Howden P.J."/>
            <person name="Huckle E."/>
            <person name="Johnson C."/>
            <person name="Johnson D."/>
            <person name="Joy A.A."/>
            <person name="Kay M."/>
            <person name="Keenan S."/>
            <person name="Kershaw J.K."/>
            <person name="Kimberley A.M."/>
            <person name="King A."/>
            <person name="Knights A."/>
            <person name="Laird G.K."/>
            <person name="Langford C."/>
            <person name="Lawlor S."/>
            <person name="Leongamornlert D.A."/>
            <person name="Leversha M."/>
            <person name="Lloyd C."/>
            <person name="Lloyd D.M."/>
            <person name="Lovell J."/>
            <person name="Martin S."/>
            <person name="Mashreghi-Mohammadi M."/>
            <person name="Matthews L."/>
            <person name="McLaren S."/>
            <person name="McLay K.E."/>
            <person name="McMurray A."/>
            <person name="Milne S."/>
            <person name="Nickerson T."/>
            <person name="Nisbett J."/>
            <person name="Nordsiek G."/>
            <person name="Pearce A.V."/>
            <person name="Peck A.I."/>
            <person name="Porter K.M."/>
            <person name="Pandian R."/>
            <person name="Pelan S."/>
            <person name="Phillimore B."/>
            <person name="Povey S."/>
            <person name="Ramsey Y."/>
            <person name="Rand V."/>
            <person name="Scharfe M."/>
            <person name="Sehra H.K."/>
            <person name="Shownkeen R."/>
            <person name="Sims S.K."/>
            <person name="Skuce C.D."/>
            <person name="Smith M."/>
            <person name="Steward C.A."/>
            <person name="Swarbreck D."/>
            <person name="Sycamore N."/>
            <person name="Tester J."/>
            <person name="Thorpe A."/>
            <person name="Tracey A."/>
            <person name="Tromans A."/>
            <person name="Thomas D.W."/>
            <person name="Wall M."/>
            <person name="Wallis J.M."/>
            <person name="West A.P."/>
            <person name="Whitehead S.L."/>
            <person name="Willey D.L."/>
            <person name="Williams S.A."/>
            <person name="Wilming L."/>
            <person name="Wray P.W."/>
            <person name="Young L."/>
            <person name="Ashurst J.L."/>
            <person name="Coulson A."/>
            <person name="Blocker H."/>
            <person name="Durbin R.M."/>
            <person name="Sulston J.E."/>
            <person name="Hubbard T."/>
            <person name="Jackson M.J."/>
            <person name="Bentley D.R."/>
            <person name="Beck S."/>
            <person name="Rogers J."/>
            <person name="Dunham I."/>
        </authorList>
    </citation>
    <scope>NUCLEOTIDE SEQUENCE [LARGE SCALE GENOMIC DNA]</scope>
</reference>
<reference key="7">
    <citation type="submission" date="2005-07" db="EMBL/GenBank/DDBJ databases">
        <authorList>
            <person name="Mural R.J."/>
            <person name="Istrail S."/>
            <person name="Sutton G.G."/>
            <person name="Florea L."/>
            <person name="Halpern A.L."/>
            <person name="Mobarry C.M."/>
            <person name="Lippert R."/>
            <person name="Walenz B."/>
            <person name="Shatkay H."/>
            <person name="Dew I."/>
            <person name="Miller J.R."/>
            <person name="Flanigan M.J."/>
            <person name="Edwards N.J."/>
            <person name="Bolanos R."/>
            <person name="Fasulo D."/>
            <person name="Halldorsson B.V."/>
            <person name="Hannenhalli S."/>
            <person name="Turner R."/>
            <person name="Yooseph S."/>
            <person name="Lu F."/>
            <person name="Nusskern D.R."/>
            <person name="Shue B.C."/>
            <person name="Zheng X.H."/>
            <person name="Zhong F."/>
            <person name="Delcher A.L."/>
            <person name="Huson D.H."/>
            <person name="Kravitz S.A."/>
            <person name="Mouchard L."/>
            <person name="Reinert K."/>
            <person name="Remington K.A."/>
            <person name="Clark A.G."/>
            <person name="Waterman M.S."/>
            <person name="Eichler E.E."/>
            <person name="Adams M.D."/>
            <person name="Hunkapiller M.W."/>
            <person name="Myers E.W."/>
            <person name="Venter J.C."/>
        </authorList>
    </citation>
    <scope>NUCLEOTIDE SEQUENCE [LARGE SCALE GENOMIC DNA]</scope>
</reference>
<reference key="8">
    <citation type="journal article" date="2004" name="Genome Res.">
        <title>The status, quality, and expansion of the NIH full-length cDNA project: the Mammalian Gene Collection (MGC).</title>
        <authorList>
            <consortium name="The MGC Project Team"/>
        </authorList>
    </citation>
    <scope>NUCLEOTIDE SEQUENCE [LARGE SCALE MRNA]</scope>
    <scope>VARIANTS CYS-167 AND MET-174</scope>
    <source>
        <tissue>Liver</tissue>
    </source>
</reference>
<reference key="9">
    <citation type="journal article" date="1973" name="Biochemistry">
        <title>Structure of alpha 1-acid glycoprotein. The complete amino acid sequence, multiple amino acid substitutions, and homology with the immunoglobulins.</title>
        <authorList>
            <person name="Schmid K."/>
            <person name="Kaufmann H."/>
            <person name="Isemura S."/>
            <person name="Bauer F."/>
            <person name="Emura J."/>
            <person name="Motoyama T."/>
            <person name="Ishiguro M."/>
            <person name="Nanno S."/>
        </authorList>
    </citation>
    <scope>PROTEIN SEQUENCE OF 19-129</scope>
    <scope>PYROGLUTAMATE FORMATION AT GLN-19</scope>
</reference>
<reference key="10">
    <citation type="journal article" date="1972" name="Biochemistry">
        <title>Isolation and partial characterization of the cyanogen bromide fragments of alpha 1-acid glycoprotein and the elucidation of the amino acid sequence of the carboxyl-terminal cyanogen bromide fragment.</title>
        <authorList>
            <person name="Ikenaka T."/>
            <person name="Ishiguro M."/>
            <person name="Emura J."/>
            <person name="Kaufmann H."/>
            <person name="Isemura S."/>
            <person name="Bauer W."/>
            <person name="Schmid K."/>
        </authorList>
    </citation>
    <scope>PROTEIN SEQUENCE OF 129-201</scope>
</reference>
<reference key="11">
    <citation type="journal article" date="1974" name="Biochemistry">
        <title>The disulfide bonds of alpha1-acid glycoprotein.</title>
        <authorList>
            <person name="Schmid K."/>
            <person name="Buergi W."/>
            <person name="Collins J.H."/>
            <person name="Nanno S."/>
        </authorList>
    </citation>
    <scope>DISULFIDE BONDS</scope>
</reference>
<reference key="12">
    <citation type="journal article" date="1992" name="Biochem. J.">
        <title>Analysis of the five glycosylation sites of human alpha 1-acid glycoprotein.</title>
        <authorList>
            <person name="Treuheit M.J."/>
            <person name="Costello C.E."/>
            <person name="Halsall H.B."/>
        </authorList>
    </citation>
    <scope>GLYCOSYLATION AT ASN-33; ASN-56; ASN-72; ASN-93 AND ASN-103</scope>
</reference>
<reference key="13">
    <citation type="journal article" date="2003" name="Nat. Biotechnol.">
        <title>Identification and quantification of N-linked glycoproteins using hydrazide chemistry, stable isotope labeling and mass spectrometry.</title>
        <authorList>
            <person name="Zhang H."/>
            <person name="Li X.-J."/>
            <person name="Martin D.B."/>
            <person name="Aebersold R."/>
        </authorList>
    </citation>
    <scope>GLYCOSYLATION AT ASN-33</scope>
</reference>
<reference key="14">
    <citation type="journal article" date="2004" name="J. Proteome Res.">
        <title>A new strategy for identification of N-glycosylated proteins and unambiguous assignment of their glycosylation sites using HILIC enrichment and partial deglycosylation.</title>
        <authorList>
            <person name="Hagglund P."/>
            <person name="Bunkenborg J."/>
            <person name="Elortza F."/>
            <person name="Jensen O.N."/>
            <person name="Roepstorff P."/>
        </authorList>
    </citation>
    <scope>GLYCOSYLATION AT ASN-33; ASN-72 AND ASN-93</scope>
    <scope>IDENTIFICATION BY MASS SPECTROMETRY</scope>
</reference>
<reference key="15">
    <citation type="journal article" date="2004" name="Mol. Cell. Proteomics">
        <title>A proteomic analysis of human bile.</title>
        <authorList>
            <person name="Kristiansen T.Z."/>
            <person name="Bunkenborg J."/>
            <person name="Gronborg M."/>
            <person name="Molina H."/>
            <person name="Thuluvath P.J."/>
            <person name="Argani P."/>
            <person name="Goggins M.G."/>
            <person name="Maitra A."/>
            <person name="Pandey A."/>
        </authorList>
    </citation>
    <scope>GLYCOSYLATION [LARGE SCALE ANALYSIS] AT ASN-33 AND ASN-93</scope>
    <source>
        <tissue>Bile</tissue>
    </source>
</reference>
<reference key="16">
    <citation type="journal article" date="2004" name="Proteomics">
        <title>Screening for N-glycosylated proteins by liquid chromatography mass spectrometry.</title>
        <authorList>
            <person name="Bunkenborg J."/>
            <person name="Pilch B.J."/>
            <person name="Podtelejnikov A.V."/>
            <person name="Wisniewski J.R."/>
        </authorList>
    </citation>
    <scope>GLYCOSYLATION [LARGE SCALE ANALYSIS] AT ASN-33; ASN-56; ASN-72; ASN-93 AND ASN-103</scope>
    <source>
        <tissue>Plasma</tissue>
    </source>
</reference>
<reference key="17">
    <citation type="journal article" date="2005" name="J. Proteome Res.">
        <title>Human plasma N-glycoproteome analysis by immunoaffinity subtraction, hydrazide chemistry, and mass spectrometry.</title>
        <authorList>
            <person name="Liu T."/>
            <person name="Qian W.-J."/>
            <person name="Gritsenko M.A."/>
            <person name="Camp D.G. II"/>
            <person name="Monroe M.E."/>
            <person name="Moore R.J."/>
            <person name="Smith R.D."/>
        </authorList>
    </citation>
    <scope>GLYCOSYLATION [LARGE SCALE ANALYSIS] AT ASN-33; ASN-56; ASN-72; ASN-93 AND ASN-103</scope>
    <source>
        <tissue>Plasma</tissue>
    </source>
</reference>
<reference key="18">
    <citation type="journal article" date="2006" name="Biochim. Biophys. Acta">
        <title>Selective binding of imatinib to the genetic variants of human alpha1-acid glycoprotein.</title>
        <authorList>
            <person name="Fitos I."/>
            <person name="Visy J."/>
            <person name="Zsila F."/>
            <person name="Mady G."/>
            <person name="Simonyi M."/>
        </authorList>
    </citation>
    <scope>FUNCTION</scope>
</reference>
<reference key="19">
    <citation type="journal article" date="2006" name="J. Proteome Res.">
        <title>Identification of N-linked glycoproteins in human saliva by glycoprotein capture and mass spectrometry.</title>
        <authorList>
            <person name="Ramachandran P."/>
            <person name="Boontheung P."/>
            <person name="Xie Y."/>
            <person name="Sondej M."/>
            <person name="Wong D.T."/>
            <person name="Loo J.A."/>
        </authorList>
    </citation>
    <scope>GLYCOSYLATION [LARGE SCALE ANALYSIS] AT ASN-93</scope>
    <source>
        <tissue>Saliva</tissue>
    </source>
</reference>
<reference key="20">
    <citation type="journal article" date="2007" name="Biochim. Biophys. Acta">
        <title>The drug binding site of human alpha1-acid glycoprotein: insight from induced circular dichroism and electronic absorption spectra.</title>
        <authorList>
            <person name="Zsila F."/>
            <person name="Iwao Y."/>
        </authorList>
    </citation>
    <scope>FUNCTION</scope>
</reference>
<reference key="21">
    <citation type="journal article" date="2009" name="J. Proteome Res.">
        <title>Glycoproteomics analysis of human liver tissue by combination of multiple enzyme digestion and hydrazide chemistry.</title>
        <authorList>
            <person name="Chen R."/>
            <person name="Jiang X."/>
            <person name="Sun D."/>
            <person name="Han G."/>
            <person name="Wang F."/>
            <person name="Ye M."/>
            <person name="Wang L."/>
            <person name="Zou H."/>
        </authorList>
    </citation>
    <scope>GLYCOSYLATION [LARGE SCALE ANALYSIS] AT ASN-93 AND ASN-103</scope>
    <source>
        <tissue>Liver</tissue>
    </source>
</reference>
<reference key="22">
    <citation type="journal article" date="2009" name="Nat. Methods">
        <title>Enrichment of glycopeptides for glycan structure and attachment site identification.</title>
        <authorList>
            <person name="Nilsson J."/>
            <person name="Rueetschi U."/>
            <person name="Halim A."/>
            <person name="Hesse C."/>
            <person name="Carlsohn E."/>
            <person name="Brinkmalm G."/>
            <person name="Larson G."/>
        </authorList>
    </citation>
    <scope>GLYCOSYLATION [LARGE SCALE ANALYSIS] AT ASN-33 AND ASN-72</scope>
    <scope>STRUCTURE OF CARBOHYDRATES</scope>
    <source>
        <tissue>Cerebrospinal fluid</tissue>
    </source>
</reference>
<reference key="23">
    <citation type="journal article" date="2012" name="Mol. Cell. Proteomics">
        <title>Human urinary glycoproteomics; attachment site specific analysis of N- and O-linked glycosylations by CID and ECD.</title>
        <authorList>
            <person name="Halim A."/>
            <person name="Nilsson J."/>
            <person name="Ruetschi U."/>
            <person name="Hesse C."/>
            <person name="Larson G."/>
        </authorList>
    </citation>
    <scope>GLYCOSYLATION AT ASN-33</scope>
    <scope>STRUCTURE OF CARBOHYDRATES</scope>
    <scope>IDENTIFICATION BY MASS SPECTROMETRY</scope>
</reference>
<reference key="24">
    <citation type="journal article" date="2008" name="J. Mol. Biol.">
        <title>The 1.8-A crystal structure of alpha1-acid glycoprotein (Orosomucoid) solved by UV RIP reveals the broad drug-binding activity of this human plasma lipocalin.</title>
        <authorList>
            <person name="Schonfeld D.L."/>
            <person name="Ravelli R.B."/>
            <person name="Mueller U."/>
            <person name="Skerra A."/>
        </authorList>
    </citation>
    <scope>X-RAY CRYSTALLOGRAPHY (1.8 ANGSTROMS) OF 20-201</scope>
    <scope>DOMAIN</scope>
    <scope>DISULFIDE BONDS</scope>
</reference>
<reference key="25">
    <citation type="journal article" date="1997" name="Hum. Genet.">
        <title>Human orosomucoid polymorphism: molecular basis of the three common ORM1 alleles, ORM1*F1, ORM1*F2, and ORM1*S.</title>
        <authorList>
            <person name="Yuasa I."/>
            <person name="Umetsu K."/>
            <person name="Vogt U."/>
            <person name="Nakamura H."/>
            <person name="Nanba E."/>
            <person name="Tamaki N."/>
            <person name="Irizawa Y."/>
        </authorList>
    </citation>
    <scope>VARIANTS GLN-38 AND MET-174</scope>
</reference>
<gene>
    <name type="primary">ORM1</name>
    <name type="synonym">AGP1</name>
</gene>
<protein>
    <recommendedName>
        <fullName>Alpha-1-acid glycoprotein 1</fullName>
        <shortName>AGP 1</shortName>
    </recommendedName>
    <alternativeName>
        <fullName>Orosomucoid-1</fullName>
        <shortName>OMD 1</shortName>
    </alternativeName>
</protein>
<comment type="function">
    <text evidence="10 11">Functions as a transport protein in the blood stream. Binds various ligands in the interior of its beta-barrel domain. Also binds synthetic drugs and influences their distribution and availability in the body. Appears to function in modulating the activity of the immune system during the acute-phase reaction.</text>
</comment>
<comment type="interaction">
    <interactant intactId="EBI-976767">
        <id>P02763</id>
    </interactant>
    <interactant intactId="EBI-3911979">
        <id>P19652</id>
        <label>ORM2</label>
    </interactant>
    <organismsDiffer>false</organismsDiffer>
    <experiments>4</experiments>
</comment>
<comment type="interaction">
    <interactant intactId="EBI-976767">
        <id>P02763</id>
    </interactant>
    <interactant intactId="EBI-953978">
        <id>P05121</id>
        <label>SERPINE1</label>
    </interactant>
    <organismsDiffer>false</organismsDiffer>
    <experiments>4</experiments>
</comment>
<comment type="subcellular location">
    <subcellularLocation>
        <location>Secreted</location>
    </subcellularLocation>
</comment>
<comment type="tissue specificity">
    <text>Expressed by the liver and secreted in plasma.</text>
</comment>
<comment type="induction">
    <text>Synthesis is controlled by glucocorticoids, interleukin-1 and interleukin-6, It increases 5- to 50-fold upon inflammation.</text>
</comment>
<comment type="domain">
    <text evidence="12">Contains a beta-barrel that binds various ligands in its interior.</text>
</comment>
<comment type="PTM">
    <text evidence="1 2 3 5 7 8 9 13 14 15">N-glycosylated. N-glycan heterogeneity at Asn-33: Hex5HexNAc4 (minor), Hex6HexNAc5 (major) and dHex1Hex6HexNAc5 (minor).</text>
</comment>
<comment type="polymorphism">
    <text>Three common alleles of ORM1 are known. ORM1*F1 has Gln-38/Val-174; ORM1*F2 has Gln-38/Met-174 and ORM1*S has Arg-38/Val-174. The sequence shown is that of allele ORM1*S.</text>
</comment>
<comment type="similarity">
    <text evidence="20">Belongs to the calycin superfamily. Lipocalin family.</text>
</comment>
<comment type="sequence caution" evidence="20">
    <conflict type="erroneous gene model prediction">
        <sequence resource="EMBL-CDS" id="CAA29229"/>
    </conflict>
</comment>
<organism>
    <name type="scientific">Homo sapiens</name>
    <name type="common">Human</name>
    <dbReference type="NCBI Taxonomy" id="9606"/>
    <lineage>
        <taxon>Eukaryota</taxon>
        <taxon>Metazoa</taxon>
        <taxon>Chordata</taxon>
        <taxon>Craniata</taxon>
        <taxon>Vertebrata</taxon>
        <taxon>Euteleostomi</taxon>
        <taxon>Mammalia</taxon>
        <taxon>Eutheria</taxon>
        <taxon>Euarchontoglires</taxon>
        <taxon>Primates</taxon>
        <taxon>Haplorrhini</taxon>
        <taxon>Catarrhini</taxon>
        <taxon>Hominidae</taxon>
        <taxon>Homo</taxon>
    </lineage>
</organism>
<sequence>MALSWVLTVLSLLPLLEAQIPLCANLVPVPITNATLDRITGKWFYIASAFRNEEYNKSVQEIQATFFYFTPNKTEDTIFLREYQTRQDQCIYNTTYLNVQRENGTISRYVGGQEHFAHLLILRDTKTYMLAFDVNDEKNWGLSVYADKPETTKEQLGEFYEALDCLRIPKSDVVYTDWKKDKCEPLEKQHEKERKQEEGES</sequence>
<feature type="signal peptide" evidence="17">
    <location>
        <begin position="1"/>
        <end position="18"/>
    </location>
</feature>
<feature type="chain" id="PRO_0000017860" description="Alpha-1-acid glycoprotein 1">
    <location>
        <begin position="19"/>
        <end position="201"/>
    </location>
</feature>
<feature type="modified residue" description="Pyrrolidone carboxylic acid" evidence="17">
    <location>
        <position position="19"/>
    </location>
</feature>
<feature type="glycosylation site" description="N-linked (GlcNAc...) (complex) asparagine" evidence="1 2 3 5 7 8 14 15">
    <location>
        <position position="33"/>
    </location>
</feature>
<feature type="glycosylation site" description="N-linked (GlcNAc...) asparagine" evidence="2 7 8 16">
    <location>
        <position position="56"/>
    </location>
</feature>
<feature type="glycosylation site" description="N-linked (GlcNAc...) (complex) asparagine" evidence="2 5 7 8 14">
    <location>
        <position position="72"/>
    </location>
</feature>
<feature type="glycosylation site" description="N-linked (GlcNAc...) asparagine" evidence="2 3 5 7 8 9 13 16">
    <location>
        <position position="93"/>
    </location>
</feature>
<feature type="glycosylation site" id="CAR_000170" description="N-linked (GlcNAc...) asparagine" evidence="2 7 8 13">
    <location>
        <position position="103"/>
    </location>
</feature>
<feature type="disulfide bond" evidence="16">
    <location>
        <begin position="23"/>
        <end position="165"/>
    </location>
</feature>
<feature type="disulfide bond" evidence="16">
    <location>
        <begin position="90"/>
        <end position="183"/>
    </location>
</feature>
<feature type="sequence variant" id="VAR_013840" description="In allele ORM1*S; dbSNP:rs17650." evidence="4 6 18 19">
    <original>R</original>
    <variation>Q</variation>
    <location>
        <position position="38"/>
    </location>
</feature>
<feature type="sequence variant" id="VAR_056166" description="In dbSNP:rs3182034." evidence="6">
    <original>R</original>
    <variation>C</variation>
    <location>
        <position position="167"/>
    </location>
</feature>
<feature type="sequence variant" id="VAR_013841" description="In allele ORM1*F2; dbSNP:rs1126801." evidence="6 18">
    <original>V</original>
    <variation>M</variation>
    <location>
        <position position="174"/>
    </location>
</feature>
<feature type="sequence conflict" description="In Ref. 8; AAI43315." evidence="20" ref="8">
    <original>K</original>
    <variation>R</variation>
    <location>
        <position position="170"/>
    </location>
</feature>
<feature type="sequence conflict" description="In Ref. 10; AA sequence." evidence="20" ref="10">
    <location>
        <position position="182"/>
    </location>
</feature>
<feature type="sequence conflict" description="In Ref. 10; AA sequence." evidence="20" ref="10">
    <location>
        <position position="193"/>
    </location>
</feature>
<feature type="helix" evidence="21">
    <location>
        <begin position="24"/>
        <end position="26"/>
    </location>
</feature>
<feature type="helix" evidence="21">
    <location>
        <begin position="33"/>
        <end position="39"/>
    </location>
</feature>
<feature type="strand" evidence="21">
    <location>
        <begin position="41"/>
        <end position="52"/>
    </location>
</feature>
<feature type="helix" evidence="21">
    <location>
        <begin position="53"/>
        <end position="59"/>
    </location>
</feature>
<feature type="strand" evidence="21">
    <location>
        <begin position="62"/>
        <end position="72"/>
    </location>
</feature>
<feature type="turn" evidence="21">
    <location>
        <begin position="73"/>
        <end position="76"/>
    </location>
</feature>
<feature type="strand" evidence="21">
    <location>
        <begin position="77"/>
        <end position="86"/>
    </location>
</feature>
<feature type="strand" evidence="21">
    <location>
        <begin position="89"/>
        <end position="100"/>
    </location>
</feature>
<feature type="turn" evidence="21">
    <location>
        <begin position="101"/>
        <end position="104"/>
    </location>
</feature>
<feature type="strand" evidence="21">
    <location>
        <begin position="105"/>
        <end position="110"/>
    </location>
</feature>
<feature type="strand" evidence="21">
    <location>
        <begin position="113"/>
        <end position="121"/>
    </location>
</feature>
<feature type="strand" evidence="21">
    <location>
        <begin position="127"/>
        <end position="132"/>
    </location>
</feature>
<feature type="helix" evidence="21">
    <location>
        <begin position="137"/>
        <end position="139"/>
    </location>
</feature>
<feature type="strand" evidence="21">
    <location>
        <begin position="141"/>
        <end position="149"/>
    </location>
</feature>
<feature type="turn" evidence="21">
    <location>
        <begin position="153"/>
        <end position="156"/>
    </location>
</feature>
<feature type="helix" evidence="21">
    <location>
        <begin position="157"/>
        <end position="166"/>
    </location>
</feature>
<feature type="helix" evidence="21">
    <location>
        <begin position="170"/>
        <end position="172"/>
    </location>
</feature>
<feature type="helix" evidence="21">
    <location>
        <begin position="178"/>
        <end position="180"/>
    </location>
</feature>
<feature type="helix" evidence="21">
    <location>
        <begin position="184"/>
        <end position="192"/>
    </location>
</feature>
<evidence type="ECO:0000269" key="1">
    <source>
    </source>
</evidence>
<evidence type="ECO:0000269" key="2">
    <source>
    </source>
</evidence>
<evidence type="ECO:0000269" key="3">
    <source>
    </source>
</evidence>
<evidence type="ECO:0000269" key="4">
    <source>
    </source>
</evidence>
<evidence type="ECO:0000269" key="5">
    <source>
    </source>
</evidence>
<evidence type="ECO:0000269" key="6">
    <source>
    </source>
</evidence>
<evidence type="ECO:0000269" key="7">
    <source>
    </source>
</evidence>
<evidence type="ECO:0000269" key="8">
    <source>
    </source>
</evidence>
<evidence type="ECO:0000269" key="9">
    <source>
    </source>
</evidence>
<evidence type="ECO:0000269" key="10">
    <source>
    </source>
</evidence>
<evidence type="ECO:0000269" key="11">
    <source>
    </source>
</evidence>
<evidence type="ECO:0000269" key="12">
    <source>
    </source>
</evidence>
<evidence type="ECO:0000269" key="13">
    <source>
    </source>
</evidence>
<evidence type="ECO:0000269" key="14">
    <source>
    </source>
</evidence>
<evidence type="ECO:0000269" key="15">
    <source>
    </source>
</evidence>
<evidence type="ECO:0000269" key="16">
    <source>
    </source>
</evidence>
<evidence type="ECO:0000269" key="17">
    <source>
    </source>
</evidence>
<evidence type="ECO:0000269" key="18">
    <source>
    </source>
</evidence>
<evidence type="ECO:0000269" key="19">
    <source ref="7"/>
</evidence>
<evidence type="ECO:0000305" key="20"/>
<evidence type="ECO:0007829" key="21">
    <source>
        <dbReference type="PDB" id="3KQ0"/>
    </source>
</evidence>
<accession>P02763</accession>
<accession>B7ZKQ5</accession>
<accession>Q5T539</accession>
<accession>Q5U067</accession>
<accession>Q8TC16</accession>
<proteinExistence type="evidence at protein level"/>
<name>A1AG1_HUMAN</name>
<keyword id="KW-0002">3D-structure</keyword>
<keyword id="KW-0011">Acute phase</keyword>
<keyword id="KW-0903">Direct protein sequencing</keyword>
<keyword id="KW-1015">Disulfide bond</keyword>
<keyword id="KW-0325">Glycoprotein</keyword>
<keyword id="KW-1267">Proteomics identification</keyword>
<keyword id="KW-0873">Pyrrolidone carboxylic acid</keyword>
<keyword id="KW-1185">Reference proteome</keyword>
<keyword id="KW-0964">Secreted</keyword>
<keyword id="KW-0732">Signal</keyword>
<keyword id="KW-0813">Transport</keyword>
<dbReference type="EMBL" id="X02544">
    <property type="protein sequence ID" value="CAA26397.1"/>
    <property type="molecule type" value="mRNA"/>
</dbReference>
<dbReference type="EMBL" id="M13692">
    <property type="protein sequence ID" value="AAA35515.1"/>
    <property type="molecule type" value="mRNA"/>
</dbReference>
<dbReference type="EMBL" id="X05779">
    <property type="protein sequence ID" value="CAA29229.1"/>
    <property type="status" value="ALT_SEQ"/>
    <property type="molecule type" value="Genomic_DNA"/>
</dbReference>
<dbReference type="EMBL" id="X05780">
    <property type="protein sequence ID" value="CAA29229.1"/>
    <property type="status" value="JOINED"/>
    <property type="molecule type" value="Genomic_DNA"/>
</dbReference>
<dbReference type="EMBL" id="X05781">
    <property type="protein sequence ID" value="CAA29229.1"/>
    <property type="status" value="JOINED"/>
    <property type="molecule type" value="Genomic_DNA"/>
</dbReference>
<dbReference type="EMBL" id="X05782">
    <property type="protein sequence ID" value="CAA29229.1"/>
    <property type="status" value="JOINED"/>
    <property type="molecule type" value="Genomic_DNA"/>
</dbReference>
<dbReference type="EMBL" id="X05783">
    <property type="protein sequence ID" value="CAA29229.1"/>
    <property type="status" value="JOINED"/>
    <property type="molecule type" value="Genomic_DNA"/>
</dbReference>
<dbReference type="EMBL" id="X05784">
    <property type="protein sequence ID" value="CAA29229.1"/>
    <property type="status" value="JOINED"/>
    <property type="molecule type" value="Genomic_DNA"/>
</dbReference>
<dbReference type="EMBL" id="X06676">
    <property type="status" value="NOT_ANNOTATED_CDS"/>
    <property type="molecule type" value="Genomic_DNA"/>
</dbReference>
<dbReference type="EMBL" id="X06680">
    <property type="status" value="NOT_ANNOTATED_CDS"/>
    <property type="molecule type" value="Genomic_DNA"/>
</dbReference>
<dbReference type="EMBL" id="BT019790">
    <property type="protein sequence ID" value="AAV38593.1"/>
    <property type="molecule type" value="mRNA"/>
</dbReference>
<dbReference type="EMBL" id="AK312035">
    <property type="protein sequence ID" value="BAG34972.1"/>
    <property type="molecule type" value="mRNA"/>
</dbReference>
<dbReference type="EMBL" id="AL356796">
    <property type="status" value="NOT_ANNOTATED_CDS"/>
    <property type="molecule type" value="Genomic_DNA"/>
</dbReference>
<dbReference type="EMBL" id="CH471090">
    <property type="protein sequence ID" value="EAW87416.1"/>
    <property type="molecule type" value="Genomic_DNA"/>
</dbReference>
<dbReference type="EMBL" id="BC104818">
    <property type="protein sequence ID" value="AAI04819.1"/>
    <property type="molecule type" value="mRNA"/>
</dbReference>
<dbReference type="EMBL" id="BC104820">
    <property type="protein sequence ID" value="AAI04821.1"/>
    <property type="molecule type" value="mRNA"/>
</dbReference>
<dbReference type="EMBL" id="BC143313">
    <property type="protein sequence ID" value="AAI43314.1"/>
    <property type="molecule type" value="mRNA"/>
</dbReference>
<dbReference type="EMBL" id="BC143314">
    <property type="protein sequence ID" value="AAI43315.1"/>
    <property type="molecule type" value="mRNA"/>
</dbReference>
<dbReference type="EMBL" id="BC026238">
    <property type="protein sequence ID" value="AAH26238.1"/>
    <property type="molecule type" value="mRNA"/>
</dbReference>
<dbReference type="CCDS" id="CCDS6803.1"/>
<dbReference type="PIR" id="A28346">
    <property type="entry name" value="OMHU1"/>
</dbReference>
<dbReference type="RefSeq" id="NP_000598.2">
    <property type="nucleotide sequence ID" value="NM_000607.4"/>
</dbReference>
<dbReference type="PDB" id="3KQ0">
    <property type="method" value="X-ray"/>
    <property type="resolution" value="1.80 A"/>
    <property type="chains" value="A=19-201"/>
</dbReference>
<dbReference type="PDBsum" id="3KQ0"/>
<dbReference type="SASBDB" id="P02763"/>
<dbReference type="SMR" id="P02763"/>
<dbReference type="BioGRID" id="111046">
    <property type="interactions" value="81"/>
</dbReference>
<dbReference type="FunCoup" id="P02763">
    <property type="interactions" value="240"/>
</dbReference>
<dbReference type="IntAct" id="P02763">
    <property type="interactions" value="48"/>
</dbReference>
<dbReference type="MINT" id="P02763"/>
<dbReference type="STRING" id="9606.ENSP00000259396"/>
<dbReference type="BindingDB" id="P02763"/>
<dbReference type="ChEMBL" id="CHEMBL4285"/>
<dbReference type="DrugBank" id="DB12001">
    <property type="generic name" value="Abemaciclib"/>
</dbReference>
<dbReference type="DrugBank" id="DB05812">
    <property type="generic name" value="Abiraterone"/>
</dbReference>
<dbReference type="DrugBank" id="DB11703">
    <property type="generic name" value="Acalabrutinib"/>
</dbReference>
<dbReference type="DrugBank" id="DB01418">
    <property type="generic name" value="Acenocoumarol"/>
</dbReference>
<dbReference type="DrugBank" id="DB01426">
    <property type="generic name" value="Ajmaline"/>
</dbReference>
<dbReference type="DrugBank" id="DB00802">
    <property type="generic name" value="Alfentanil"/>
</dbReference>
<dbReference type="DrugBank" id="DB00346">
    <property type="generic name" value="Alfuzosin"/>
</dbReference>
<dbReference type="DrugBank" id="DB00404">
    <property type="generic name" value="Alprazolam"/>
</dbReference>
<dbReference type="DrugBank" id="DB00321">
    <property type="generic name" value="Amitriptyline"/>
</dbReference>
<dbReference type="DrugBank" id="DB00543">
    <property type="generic name" value="Amoxapine"/>
</dbReference>
<dbReference type="DrugBank" id="DB00276">
    <property type="generic name" value="Amsacrine"/>
</dbReference>
<dbReference type="DrugBank" id="DB01429">
    <property type="generic name" value="Aprindine"/>
</dbReference>
<dbReference type="DrugBank" id="DB09229">
    <property type="generic name" value="Aranidipine"/>
</dbReference>
<dbReference type="DrugBank" id="DB00278">
    <property type="generic name" value="Argatroban"/>
</dbReference>
<dbReference type="DrugBank" id="DB09204">
    <property type="generic name" value="Arotinolol"/>
</dbReference>
<dbReference type="DrugBank" id="DB06216">
    <property type="generic name" value="Asenapine"/>
</dbReference>
<dbReference type="DrugBank" id="DB01072">
    <property type="generic name" value="Atazanavir"/>
</dbReference>
<dbReference type="DrugBank" id="DB00289">
    <property type="generic name" value="Atomoxetine"/>
</dbReference>
<dbReference type="DrugBank" id="DB00572">
    <property type="generic name" value="Atropine"/>
</dbReference>
<dbReference type="DrugBank" id="DB06237">
    <property type="generic name" value="Avanafil"/>
</dbReference>
<dbReference type="DrugBank" id="DB08903">
    <property type="generic name" value="Bedaquiline"/>
</dbReference>
<dbReference type="DrugBank" id="DB16703">
    <property type="generic name" value="Belumosudil"/>
</dbReference>
<dbReference type="DrugBank" id="DB01086">
    <property type="generic name" value="Benzocaine"/>
</dbReference>
<dbReference type="DrugBank" id="DB09128">
    <property type="generic name" value="Brexpiprazole"/>
</dbReference>
<dbReference type="DrugBank" id="DB01156">
    <property type="generic name" value="Bupropion"/>
</dbReference>
<dbReference type="DrugBank" id="DB00490">
    <property type="generic name" value="Buspirone"/>
</dbReference>
<dbReference type="DrugBank" id="DB11148">
    <property type="generic name" value="Butamben"/>
</dbReference>
<dbReference type="DrugBank" id="DB08907">
    <property type="generic name" value="Canagliflozin"/>
</dbReference>
<dbReference type="DrugBank" id="DB00748">
    <property type="generic name" value="Carbinoxamine"/>
</dbReference>
<dbReference type="DrugBank" id="DB00608">
    <property type="generic name" value="Chloroquine"/>
</dbReference>
<dbReference type="DrugBank" id="DB00477">
    <property type="generic name" value="Chlorpromazine"/>
</dbReference>
<dbReference type="DrugBank" id="DB01190">
    <property type="generic name" value="Clindamycin"/>
</dbReference>
<dbReference type="DrugBank" id="DB00349">
    <property type="generic name" value="Clobazam"/>
</dbReference>
<dbReference type="DrugBank" id="DB00363">
    <property type="generic name" value="Clozapine"/>
</dbReference>
<dbReference type="DrugBank" id="DB05239">
    <property type="generic name" value="Cobimetinib"/>
</dbReference>
<dbReference type="DrugBank" id="DB00907">
    <property type="generic name" value="Cocaine"/>
</dbReference>
<dbReference type="DrugBank" id="DB08865">
    <property type="generic name" value="Crizotinib"/>
</dbReference>
<dbReference type="DrugBank" id="DB00080">
    <property type="generic name" value="Daptomycin"/>
</dbReference>
<dbReference type="DrugBank" id="DB01264">
    <property type="generic name" value="Darunavir"/>
</dbReference>
<dbReference type="DrugBank" id="DB11637">
    <property type="generic name" value="Delamanid"/>
</dbReference>
<dbReference type="DrugBank" id="DB01151">
    <property type="generic name" value="Desipramine"/>
</dbReference>
<dbReference type="DrugBank" id="DB00343">
    <property type="generic name" value="Diltiazem"/>
</dbReference>
<dbReference type="DrugBank" id="DB00975">
    <property type="generic name" value="Dipyridamole"/>
</dbReference>
<dbReference type="DrugBank" id="DB00280">
    <property type="generic name" value="Disopyramide"/>
</dbReference>
<dbReference type="DrugBank" id="DB08930">
    <property type="generic name" value="Dolutegravir"/>
</dbReference>
<dbReference type="DrugBank" id="DB01142">
    <property type="generic name" value="Doxepin"/>
</dbReference>
<dbReference type="DrugBank" id="DB00476">
    <property type="generic name" value="Duloxetine"/>
</dbReference>
<dbReference type="DrugBank" id="DB01126">
    <property type="generic name" value="Dutasteride"/>
</dbReference>
<dbReference type="DrugBank" id="DB12147">
    <property type="generic name" value="Erdafitinib"/>
</dbReference>
<dbReference type="DrugBank" id="DB00530">
    <property type="generic name" value="Erlotinib"/>
</dbReference>
<dbReference type="DrugBank" id="DB12235">
    <property type="generic name" value="Estetrol"/>
</dbReference>
<dbReference type="DrugBank" id="DB12466">
    <property type="generic name" value="Favipiravir"/>
</dbReference>
<dbReference type="DrugBank" id="DB00813">
    <property type="generic name" value="Fentanyl"/>
</dbReference>
<dbReference type="DrugBank" id="DB00950">
    <property type="generic name" value="Fexofenadine"/>
</dbReference>
<dbReference type="DrugBank" id="DB01195">
    <property type="generic name" value="Flecainide"/>
</dbReference>
<dbReference type="DrugBank" id="DB00472">
    <property type="generic name" value="Fluoxetine"/>
</dbReference>
<dbReference type="DrugBank" id="DB08906">
    <property type="generic name" value="Fluticasone furoate"/>
</dbReference>
<dbReference type="DrugBank" id="DB15149">
    <property type="generic name" value="Futibatinib"/>
</dbReference>
<dbReference type="DrugBank" id="DB00317">
    <property type="generic name" value="Gefitinib"/>
</dbReference>
<dbReference type="DrugBank" id="DB11978">
    <property type="generic name" value="Glasdegib"/>
</dbReference>
<dbReference type="DrugBank" id="DB00986">
    <property type="generic name" value="Glycopyrronium"/>
</dbReference>
<dbReference type="DrugBank" id="DB11575">
    <property type="generic name" value="Grazoprevir"/>
</dbReference>
<dbReference type="DrugBank" id="DB01611">
    <property type="generic name" value="Hydroxychloroquine"/>
</dbReference>
<dbReference type="DrugBank" id="DB09053">
    <property type="generic name" value="Ibrutinib"/>
</dbReference>
<dbReference type="DrugBank" id="DB00619">
    <property type="generic name" value="Imatinib"/>
</dbReference>
<dbReference type="DrugBank" id="DB09262">
    <property type="generic name" value="Imidafenacin"/>
</dbReference>
<dbReference type="DrugBank" id="DB00458">
    <property type="generic name" value="Imipramine"/>
</dbReference>
<dbReference type="DrugBank" id="DB00808">
    <property type="generic name" value="Indapamide"/>
</dbReference>
<dbReference type="DrugBank" id="DB00332">
    <property type="generic name" value="Ipratropium"/>
</dbReference>
<dbReference type="DrugBank" id="DB16200">
    <property type="generic name" value="Iptacopan"/>
</dbReference>
<dbReference type="DrugBank" id="DB01029">
    <property type="generic name" value="Irbesartan"/>
</dbReference>
<dbReference type="DrugBank" id="DB11757">
    <property type="generic name" value="Istradefylline"/>
</dbReference>
<dbReference type="DrugBank" id="DB08820">
    <property type="generic name" value="Ivacaftor"/>
</dbReference>
<dbReference type="DrugBank" id="DB00598">
    <property type="generic name" value="Labetalol"/>
</dbReference>
<dbReference type="DrugBank" id="DB09236">
    <property type="generic name" value="Lacidipine"/>
</dbReference>
<dbReference type="DrugBank" id="DB00281">
    <property type="generic name" value="Lidocaine"/>
</dbReference>
<dbReference type="DrugBank" id="DB01627">
    <property type="generic name" value="Lincomycin"/>
</dbReference>
<dbReference type="DrugBank" id="DB01601">
    <property type="generic name" value="Lopinavir"/>
</dbReference>
<dbReference type="DrugBank" id="DB12674">
    <property type="generic name" value="Lurbinectedin"/>
</dbReference>
<dbReference type="DrugBank" id="DB08932">
    <property type="generic name" value="Macitentan"/>
</dbReference>
<dbReference type="DrugBank" id="DB00934">
    <property type="generic name" value="Maprotiline"/>
</dbReference>
<dbReference type="DrugBank" id="DB06234">
    <property type="generic name" value="Maribavir"/>
</dbReference>
<dbReference type="DrugBank" id="DB01042">
    <property type="generic name" value="Melphalan"/>
</dbReference>
<dbReference type="DrugBank" id="DB00454">
    <property type="generic name" value="Meperidine"/>
</dbReference>
<dbReference type="DrugBank" id="DB00333">
    <property type="generic name" value="Methadone"/>
</dbReference>
<dbReference type="DrugBank" id="DB01233">
    <property type="generic name" value="Metoclopramide"/>
</dbReference>
<dbReference type="DrugBank" id="DB00683">
    <property type="generic name" value="Midazolam"/>
</dbReference>
<dbReference type="DrugBank" id="DB08893">
    <property type="generic name" value="Mirabegron"/>
</dbReference>
<dbReference type="DrugBank" id="DB01203">
    <property type="generic name" value="Nadolol"/>
</dbReference>
<dbReference type="DrugBank" id="DB00731">
    <property type="generic name" value="Nateglinide"/>
</dbReference>
<dbReference type="DrugBank" id="DB00220">
    <property type="generic name" value="Nelfinavir"/>
</dbReference>
<dbReference type="DrugBank" id="DB11828">
    <property type="generic name" value="Neratinib"/>
</dbReference>
<dbReference type="DrugBank" id="DB01115">
    <property type="generic name" value="Nifedipine"/>
</dbReference>
<dbReference type="DrugBank" id="DB12005">
    <property type="generic name" value="Nirogacestat"/>
</dbReference>
<dbReference type="DrugBank" id="DB04821">
    <property type="generic name" value="Nomifensine"/>
</dbReference>
<dbReference type="DrugBank" id="DB00540">
    <property type="generic name" value="Nortriptyline"/>
</dbReference>
<dbReference type="DrugBank" id="DB00334">
    <property type="generic name" value="Olanzapine"/>
</dbReference>
<dbReference type="DrugBank" id="DB09074">
    <property type="generic name" value="Olaparib"/>
</dbReference>
<dbReference type="DrugBank" id="DB01062">
    <property type="generic name" value="Oxybutynin"/>
</dbReference>
<dbReference type="DrugBank" id="DB00497">
    <property type="generic name" value="Oxycodone"/>
</dbReference>
<dbReference type="DrugBank" id="DB14582">
    <property type="generic name" value="Patisiran"/>
</dbReference>
<dbReference type="DrugBank" id="DB01359">
    <property type="generic name" value="Penbutolol"/>
</dbReference>
<dbReference type="DrugBank" id="DB12978">
    <property type="generic name" value="Pexidartinib"/>
</dbReference>
<dbReference type="DrugBank" id="DB00946">
    <property type="generic name" value="Phenprocoumon"/>
</dbReference>
<dbReference type="DrugBank" id="DB00960">
    <property type="generic name" value="Pindolol"/>
</dbReference>
<dbReference type="DrugBank" id="DB08860">
    <property type="generic name" value="Pitavastatin"/>
</dbReference>
<dbReference type="DrugBank" id="DB11642">
    <property type="generic name" value="Pitolisant"/>
</dbReference>
<dbReference type="DrugBank" id="DB00457">
    <property type="generic name" value="Prazosin"/>
</dbReference>
<dbReference type="DrugBank" id="DB00396">
    <property type="generic name" value="Progesterone"/>
</dbReference>
<dbReference type="DrugBank" id="DB00571">
    <property type="generic name" value="Propranolol"/>
</dbReference>
<dbReference type="DrugBank" id="DB00908">
    <property type="generic name" value="Quinidine"/>
</dbReference>
<dbReference type="DrugBank" id="DB00481">
    <property type="generic name" value="Raloxifene"/>
</dbReference>
<dbReference type="DrugBank" id="DB00243">
    <property type="generic name" value="Ranolazine"/>
</dbReference>
<dbReference type="DrugBank" id="DB11853">
    <property type="generic name" value="Relugolix"/>
</dbReference>
<dbReference type="DrugBank" id="DB00409">
    <property type="generic name" value="Remoxipride"/>
</dbReference>
<dbReference type="DrugBank" id="DB01045">
    <property type="generic name" value="Rifampin"/>
</dbReference>
<dbReference type="DrugBank" id="DB08931">
    <property type="generic name" value="Riociguat"/>
</dbReference>
<dbReference type="DrugBank" id="DB14840">
    <property type="generic name" value="Ripretinib"/>
</dbReference>
<dbReference type="DrugBank" id="DB00734">
    <property type="generic name" value="Risperidone"/>
</dbReference>
<dbReference type="DrugBank" id="DB00503">
    <property type="generic name" value="Ritonavir"/>
</dbReference>
<dbReference type="DrugBank" id="DB00296">
    <property type="generic name" value="Ropivacaine"/>
</dbReference>
<dbReference type="DrugBank" id="DB00938">
    <property type="generic name" value="Salmeterol"/>
</dbReference>
<dbReference type="DrugBank" id="DB01232">
    <property type="generic name" value="Saquinavir"/>
</dbReference>
<dbReference type="DrugBank" id="DB11689">
    <property type="generic name" value="Selumetinib"/>
</dbReference>
<dbReference type="DrugBank" id="DB00877">
    <property type="generic name" value="Sirolimus"/>
</dbReference>
<dbReference type="DrugBank" id="DB01591">
    <property type="generic name" value="Solifenacin"/>
</dbReference>
<dbReference type="DrugBank" id="DB00421">
    <property type="generic name" value="Spironolactone"/>
</dbReference>
<dbReference type="DrugBank" id="DB00864">
    <property type="generic name" value="Tacrolimus"/>
</dbReference>
<dbReference type="DrugBank" id="DB00706">
    <property type="generic name" value="Tamsulosin"/>
</dbReference>
<dbReference type="DrugBank" id="DB05521">
    <property type="generic name" value="Telaprevir"/>
</dbReference>
<dbReference type="DrugBank" id="DB00853">
    <property type="generic name" value="Temozolomide"/>
</dbReference>
<dbReference type="DrugBank" id="DB15133">
    <property type="generic name" value="Tepotinib"/>
</dbReference>
<dbReference type="DrugBank" id="DB00857">
    <property type="generic name" value="Terbinafine"/>
</dbReference>
<dbReference type="DrugBank" id="DB00342">
    <property type="generic name" value="Terfenadine"/>
</dbReference>
<dbReference type="DrugBank" id="DB01041">
    <property type="generic name" value="Thalidomide"/>
</dbReference>
<dbReference type="DrugBank" id="DB01685">
    <property type="generic name" value="Topiroxostat"/>
</dbReference>
<dbReference type="DrugBank" id="DB08867">
    <property type="generic name" value="Ulipristal"/>
</dbReference>
<dbReference type="DrugBank" id="DB09076">
    <property type="generic name" value="Umeclidinium"/>
</dbReference>
<dbReference type="DrugBank" id="DB00512">
    <property type="generic name" value="Vancomycin"/>
</dbReference>
<dbReference type="DrugBank" id="DB05294">
    <property type="generic name" value="Vandetanib"/>
</dbReference>
<dbReference type="DrugBank" id="DB08881">
    <property type="generic name" value="Vemurafenib"/>
</dbReference>
<dbReference type="DrugBank" id="DB00661">
    <property type="generic name" value="Verapamil"/>
</dbReference>
<dbReference type="DrugBank" id="DB11641">
    <property type="generic name" value="Vinflunine"/>
</dbReference>
<dbReference type="DrugBank" id="DB08828">
    <property type="generic name" value="Vismodegib"/>
</dbReference>
<dbReference type="DrugBank" id="DB11739">
    <property type="generic name" value="Vonoprazan"/>
</dbReference>
<dbReference type="DrugBank" id="DB00682">
    <property type="generic name" value="Warfarin"/>
</dbReference>
<dbReference type="DrugBank" id="DB00246">
    <property type="generic name" value="Ziprasidone"/>
</dbReference>
<dbReference type="DrugCentral" id="P02763"/>
<dbReference type="CarbonylDB" id="P02763"/>
<dbReference type="GlyConnect" id="718">
    <property type="glycosylation" value="87 N-Linked glycans (5 sites)"/>
</dbReference>
<dbReference type="GlyCosmos" id="P02763">
    <property type="glycosylation" value="5 sites, 84 glycans"/>
</dbReference>
<dbReference type="GlyGen" id="P02763">
    <property type="glycosylation" value="6 sites, 238 N-linked glycans (6 sites)"/>
</dbReference>
<dbReference type="iPTMnet" id="P02763"/>
<dbReference type="PhosphoSitePlus" id="P02763"/>
<dbReference type="BioMuta" id="ORM1"/>
<dbReference type="DMDM" id="112877"/>
<dbReference type="jPOST" id="P02763"/>
<dbReference type="MassIVE" id="P02763"/>
<dbReference type="PaxDb" id="9606-ENSP00000259396"/>
<dbReference type="PeptideAtlas" id="P02763"/>
<dbReference type="PRIDE" id="P02763"/>
<dbReference type="ProteomicsDB" id="51584"/>
<dbReference type="Antibodypedia" id="29904">
    <property type="antibodies" value="625 antibodies from 40 providers"/>
</dbReference>
<dbReference type="DNASU" id="5004"/>
<dbReference type="Ensembl" id="ENST00000259396.9">
    <property type="protein sequence ID" value="ENSP00000259396.8"/>
    <property type="gene ID" value="ENSG00000229314.6"/>
</dbReference>
<dbReference type="GeneID" id="5004"/>
<dbReference type="KEGG" id="hsa:5004"/>
<dbReference type="MANE-Select" id="ENST00000259396.9">
    <property type="protein sequence ID" value="ENSP00000259396.8"/>
    <property type="RefSeq nucleotide sequence ID" value="NM_000607.4"/>
    <property type="RefSeq protein sequence ID" value="NP_000598.2"/>
</dbReference>
<dbReference type="UCSC" id="uc004bik.5">
    <property type="organism name" value="human"/>
</dbReference>
<dbReference type="AGR" id="HGNC:8498"/>
<dbReference type="CTD" id="5004"/>
<dbReference type="DisGeNET" id="5004"/>
<dbReference type="GeneCards" id="ORM1"/>
<dbReference type="HGNC" id="HGNC:8498">
    <property type="gene designation" value="ORM1"/>
</dbReference>
<dbReference type="HPA" id="ENSG00000229314">
    <property type="expression patterns" value="Tissue enriched (liver)"/>
</dbReference>
<dbReference type="MIM" id="138600">
    <property type="type" value="gene"/>
</dbReference>
<dbReference type="neXtProt" id="NX_P02763"/>
<dbReference type="OpenTargets" id="ENSG00000229314"/>
<dbReference type="PharmGKB" id="PA260"/>
<dbReference type="VEuPathDB" id="HostDB:ENSG00000229314"/>
<dbReference type="eggNOG" id="ENOG502S0Q2">
    <property type="taxonomic scope" value="Eukaryota"/>
</dbReference>
<dbReference type="GeneTree" id="ENSGT00390000012130"/>
<dbReference type="HOGENOM" id="CLU_117688_0_0_1"/>
<dbReference type="InParanoid" id="P02763"/>
<dbReference type="OMA" id="KTFMLAF"/>
<dbReference type="OrthoDB" id="9448848at2759"/>
<dbReference type="PAN-GO" id="P02763">
    <property type="GO annotations" value="1 GO annotation based on evolutionary models"/>
</dbReference>
<dbReference type="PhylomeDB" id="P02763"/>
<dbReference type="TreeFam" id="TF343791"/>
<dbReference type="PathwayCommons" id="P02763"/>
<dbReference type="Reactome" id="R-HSA-114608">
    <property type="pathway name" value="Platelet degranulation"/>
</dbReference>
<dbReference type="Reactome" id="R-HSA-6798695">
    <property type="pathway name" value="Neutrophil degranulation"/>
</dbReference>
<dbReference type="SignaLink" id="P02763"/>
<dbReference type="BioGRID-ORCS" id="5004">
    <property type="hits" value="23 hits in 1125 CRISPR screens"/>
</dbReference>
<dbReference type="ChiTaRS" id="ORM1">
    <property type="organism name" value="human"/>
</dbReference>
<dbReference type="EvolutionaryTrace" id="P02763"/>
<dbReference type="GeneWiki" id="ORM1"/>
<dbReference type="GenomeRNAi" id="5004"/>
<dbReference type="Pharos" id="P02763">
    <property type="development level" value="Tbio"/>
</dbReference>
<dbReference type="PRO" id="PR:P02763"/>
<dbReference type="Proteomes" id="UP000005640">
    <property type="component" value="Chromosome 9"/>
</dbReference>
<dbReference type="RNAct" id="P02763">
    <property type="molecule type" value="protein"/>
</dbReference>
<dbReference type="Bgee" id="ENSG00000229314">
    <property type="expression patterns" value="Expressed in right lobe of liver and 107 other cell types or tissues"/>
</dbReference>
<dbReference type="GO" id="GO:0072562">
    <property type="term" value="C:blood microparticle"/>
    <property type="evidence" value="ECO:0007005"/>
    <property type="project" value="UniProtKB"/>
</dbReference>
<dbReference type="GO" id="GO:0062023">
    <property type="term" value="C:collagen-containing extracellular matrix"/>
    <property type="evidence" value="ECO:0007005"/>
    <property type="project" value="BHF-UCL"/>
</dbReference>
<dbReference type="GO" id="GO:0070062">
    <property type="term" value="C:extracellular exosome"/>
    <property type="evidence" value="ECO:0007005"/>
    <property type="project" value="UniProtKB"/>
</dbReference>
<dbReference type="GO" id="GO:0005576">
    <property type="term" value="C:extracellular region"/>
    <property type="evidence" value="ECO:0007005"/>
    <property type="project" value="BHF-UCL"/>
</dbReference>
<dbReference type="GO" id="GO:0005615">
    <property type="term" value="C:extracellular space"/>
    <property type="evidence" value="ECO:0000314"/>
    <property type="project" value="UniProtKB"/>
</dbReference>
<dbReference type="GO" id="GO:0031093">
    <property type="term" value="C:platelet alpha granule lumen"/>
    <property type="evidence" value="ECO:0000304"/>
    <property type="project" value="Reactome"/>
</dbReference>
<dbReference type="GO" id="GO:0035580">
    <property type="term" value="C:specific granule lumen"/>
    <property type="evidence" value="ECO:0000304"/>
    <property type="project" value="Reactome"/>
</dbReference>
<dbReference type="GO" id="GO:1904724">
    <property type="term" value="C:tertiary granule lumen"/>
    <property type="evidence" value="ECO:0000304"/>
    <property type="project" value="Reactome"/>
</dbReference>
<dbReference type="GO" id="GO:0006953">
    <property type="term" value="P:acute-phase response"/>
    <property type="evidence" value="ECO:0000304"/>
    <property type="project" value="ProtInc"/>
</dbReference>
<dbReference type="GO" id="GO:0006954">
    <property type="term" value="P:inflammatory response"/>
    <property type="evidence" value="ECO:0000304"/>
    <property type="project" value="ProtInc"/>
</dbReference>
<dbReference type="GO" id="GO:0032715">
    <property type="term" value="P:negative regulation of interleukin-6 production"/>
    <property type="evidence" value="ECO:0000314"/>
    <property type="project" value="CACAO"/>
</dbReference>
<dbReference type="GO" id="GO:0032720">
    <property type="term" value="P:negative regulation of tumor necrosis factor production"/>
    <property type="evidence" value="ECO:0000314"/>
    <property type="project" value="CACAO"/>
</dbReference>
<dbReference type="GO" id="GO:0032731">
    <property type="term" value="P:positive regulation of interleukin-1 beta production"/>
    <property type="evidence" value="ECO:0000314"/>
    <property type="project" value="UniProtKB"/>
</dbReference>
<dbReference type="GO" id="GO:0032732">
    <property type="term" value="P:positive regulation of interleukin-1 production"/>
    <property type="evidence" value="ECO:0000314"/>
    <property type="project" value="UniProtKB"/>
</dbReference>
<dbReference type="GO" id="GO:0032760">
    <property type="term" value="P:positive regulation of tumor necrosis factor production"/>
    <property type="evidence" value="ECO:0000314"/>
    <property type="project" value="UniProtKB"/>
</dbReference>
<dbReference type="GO" id="GO:0002682">
    <property type="term" value="P:regulation of immune system process"/>
    <property type="evidence" value="ECO:0007669"/>
    <property type="project" value="InterPro"/>
</dbReference>
<dbReference type="CDD" id="cd19451">
    <property type="entry name" value="lipocalin_AGP-like"/>
    <property type="match status" value="1"/>
</dbReference>
<dbReference type="FunFam" id="2.40.128.20:FF:000012">
    <property type="entry name" value="Alpha-1-acid glycoprotein 2"/>
    <property type="match status" value="1"/>
</dbReference>
<dbReference type="Gene3D" id="2.40.128.20">
    <property type="match status" value="1"/>
</dbReference>
<dbReference type="InterPro" id="IPR001500">
    <property type="entry name" value="A1A_glycop"/>
</dbReference>
<dbReference type="InterPro" id="IPR012674">
    <property type="entry name" value="Calycin"/>
</dbReference>
<dbReference type="InterPro" id="IPR000566">
    <property type="entry name" value="Lipocln_cytosolic_FA-bd_dom"/>
</dbReference>
<dbReference type="PANTHER" id="PTHR11967">
    <property type="entry name" value="ALPHA-1-ACID GLYCOPROTEIN"/>
    <property type="match status" value="1"/>
</dbReference>
<dbReference type="PANTHER" id="PTHR11967:SF2">
    <property type="entry name" value="ALPHA-1-ACID GLYCOPROTEIN 1"/>
    <property type="match status" value="1"/>
</dbReference>
<dbReference type="Pfam" id="PF00061">
    <property type="entry name" value="Lipocalin"/>
    <property type="match status" value="1"/>
</dbReference>
<dbReference type="PIRSF" id="PIRSF036899">
    <property type="entry name" value="AGP"/>
    <property type="match status" value="1"/>
</dbReference>
<dbReference type="PRINTS" id="PR00708">
    <property type="entry name" value="A1AGLPROTEIN"/>
</dbReference>
<dbReference type="SUPFAM" id="SSF50814">
    <property type="entry name" value="Lipocalins"/>
    <property type="match status" value="1"/>
</dbReference>